<name>SNPF1_DELRA</name>
<feature type="peptide" id="PRO_0000419737" description="Short neuropeptide F-1" evidence="3 4">
    <location>
        <begin position="1"/>
        <end position="11"/>
    </location>
</feature>
<feature type="peptide" id="PRO_0000419738" description="Short neuropeptide F-1(4-11)" evidence="3 4">
    <location>
        <begin position="1"/>
        <end position="11"/>
    </location>
</feature>
<feature type="modified residue" description="Phenylalanine amide" evidence="3 4">
    <location>
        <position position="11"/>
    </location>
</feature>
<feature type="unsure residue" description="L or I" evidence="4">
    <location>
        <position position="7"/>
    </location>
</feature>
<feature type="unsure residue" description="L or I" evidence="4">
    <location>
        <position position="9"/>
    </location>
</feature>
<evidence type="ECO:0000250" key="1">
    <source>
        <dbReference type="UniProtKB" id="Q9VIQ0"/>
    </source>
</evidence>
<evidence type="ECO:0000255" key="2"/>
<evidence type="ECO:0000269" key="3">
    <source>
    </source>
</evidence>
<evidence type="ECO:0000269" key="4">
    <source>
    </source>
</evidence>
<evidence type="ECO:0000303" key="5">
    <source>
    </source>
</evidence>
<evidence type="ECO:0000303" key="6">
    <source>
    </source>
</evidence>
<evidence type="ECO:0000305" key="7"/>
<dbReference type="GO" id="GO:0005576">
    <property type="term" value="C:extracellular region"/>
    <property type="evidence" value="ECO:0007669"/>
    <property type="project" value="UniProtKB-SubCell"/>
</dbReference>
<dbReference type="GO" id="GO:0007218">
    <property type="term" value="P:neuropeptide signaling pathway"/>
    <property type="evidence" value="ECO:0007669"/>
    <property type="project" value="UniProtKB-KW"/>
</dbReference>
<protein>
    <recommendedName>
        <fullName evidence="6">Short neuropeptide F-1</fullName>
        <shortName evidence="6">sNPF-1</shortName>
    </recommendedName>
    <alternativeName>
        <fullName evidence="5">RLRF-amide</fullName>
    </alternativeName>
    <component>
        <recommendedName>
            <fullName evidence="6">Short neuropeptide F-1(4-11)</fullName>
            <shortName evidence="6">sNPF-1(4-11)</shortName>
        </recommendedName>
        <alternativeName>
            <fullName evidence="5">RLRF-amide(4-11)</fullName>
        </alternativeName>
    </component>
</protein>
<comment type="subcellular location">
    <subcellularLocation>
        <location evidence="1">Secreted</location>
    </subcellularLocation>
</comment>
<comment type="tissue specificity">
    <text evidence="3 4">In larvae, both sNPF-1 and sNPF-1(4-11) are expressed in the CNS and ring gland but not the midgut or thoracic perisympathetic organs (tPSO) and abdominal perisympathetic organs (aPSO) (at protein level). In adults, both sNPF-1 and sNPF-1(4-11) are expressed in brain, cardiaca, corpora allata and thoracic-abdominal ganglion (at protein level).</text>
</comment>
<comment type="developmental stage">
    <text evidence="3 4">Detected in larvae and adults.</text>
</comment>
<comment type="mass spectrometry" mass="1329.7" method="MALDI" evidence="3 4">
    <molecule>Short neuropeptide F-1</molecule>
</comment>
<comment type="mass spectrometry" mass="1329.8" method="MALDI" evidence="3 4">
    <molecule>Short neuropeptide F-1</molecule>
</comment>
<comment type="similarity">
    <text evidence="2">Belongs to the NPY family.</text>
</comment>
<accession>B3EWL7</accession>
<accession>B3EWL6</accession>
<reference evidence="7" key="1">
    <citation type="journal article" date="2011" name="Peptides">
        <title>Neuropeptides associated with the central nervous system of the cabbage root fly, Delia radicum (L).</title>
        <authorList>
            <person name="Audsley N."/>
            <person name="Matthews H.J."/>
            <person name="Down R.E."/>
            <person name="Weaver R.J."/>
        </authorList>
    </citation>
    <scope>PROTEIN SEQUENCE</scope>
    <scope>TISSUE SPECIFICITY</scope>
    <scope>MASS SPECTROMETRY</scope>
    <scope>AMIDATION AT PHE-11</scope>
    <source>
        <tissue evidence="3">Abdominal ganglion</tissue>
        <tissue evidence="3">Brain</tissue>
        <tissue evidence="3">Corpora allata</tissue>
        <tissue evidence="3">Corpora cardiaca</tissue>
    </source>
</reference>
<reference evidence="7" key="2">
    <citation type="journal article" date="2012" name="PLoS ONE">
        <title>Peptidomics of the agriculturally damaging larval stage of the cabbage root fly Delia radicum (Diptera: Anthomyiidae).</title>
        <authorList>
            <person name="Zoephel J."/>
            <person name="Reiher W."/>
            <person name="Rexer K.-H."/>
            <person name="Kahnt J."/>
            <person name="Wegener C."/>
        </authorList>
    </citation>
    <scope>PROTEIN SEQUENCE</scope>
    <scope>TISSUE SPECIFICITY</scope>
    <scope>DEVELOPMENTAL STAGE</scope>
    <scope>MASS SPECTROMETRY</scope>
    <scope>AMIDATION AT PHE-11</scope>
    <source>
        <tissue evidence="4">CNS</tissue>
        <tissue evidence="4">Ring ganglion</tissue>
    </source>
</reference>
<proteinExistence type="evidence at protein level"/>
<organism>
    <name type="scientific">Delia radicum</name>
    <name type="common">Cabbage root fly</name>
    <name type="synonym">Anthomyia brassicae</name>
    <dbReference type="NCBI Taxonomy" id="30064"/>
    <lineage>
        <taxon>Eukaryota</taxon>
        <taxon>Metazoa</taxon>
        <taxon>Ecdysozoa</taxon>
        <taxon>Arthropoda</taxon>
        <taxon>Hexapoda</taxon>
        <taxon>Insecta</taxon>
        <taxon>Pterygota</taxon>
        <taxon>Neoptera</taxon>
        <taxon>Endopterygota</taxon>
        <taxon>Diptera</taxon>
        <taxon>Brachycera</taxon>
        <taxon>Muscomorpha</taxon>
        <taxon>Muscoidea</taxon>
        <taxon>Anthomyiidae</taxon>
        <taxon>Anthomyiinae</taxon>
        <taxon>Delia</taxon>
    </lineage>
</organism>
<keyword id="KW-0027">Amidation</keyword>
<keyword id="KW-0903">Direct protein sequencing</keyword>
<keyword id="KW-0527">Neuropeptide</keyword>
<keyword id="KW-0964">Secreted</keyword>
<sequence length="11" mass="1331">AQRSPSLRLRF</sequence>